<proteinExistence type="inferred from homology"/>
<dbReference type="EC" id="5.1.1.3" evidence="1"/>
<dbReference type="EMBL" id="CP000253">
    <property type="protein sequence ID" value="ABD30220.1"/>
    <property type="molecule type" value="Genomic_DNA"/>
</dbReference>
<dbReference type="RefSeq" id="YP_499650.1">
    <property type="nucleotide sequence ID" value="NC_007795.1"/>
</dbReference>
<dbReference type="SMR" id="Q2FZC6"/>
<dbReference type="STRING" id="93061.SAOUHSC_01106"/>
<dbReference type="PaxDb" id="1280-SAXN108_1145"/>
<dbReference type="GeneID" id="3920748"/>
<dbReference type="KEGG" id="sao:SAOUHSC_01106"/>
<dbReference type="PATRIC" id="fig|93061.5.peg.1013"/>
<dbReference type="eggNOG" id="COG0796">
    <property type="taxonomic scope" value="Bacteria"/>
</dbReference>
<dbReference type="HOGENOM" id="CLU_052344_0_2_9"/>
<dbReference type="OrthoDB" id="9801055at2"/>
<dbReference type="UniPathway" id="UPA00219"/>
<dbReference type="PRO" id="PR:Q2FZC6"/>
<dbReference type="Proteomes" id="UP000008816">
    <property type="component" value="Chromosome"/>
</dbReference>
<dbReference type="GO" id="GO:0008881">
    <property type="term" value="F:glutamate racemase activity"/>
    <property type="evidence" value="ECO:0000318"/>
    <property type="project" value="GO_Central"/>
</dbReference>
<dbReference type="GO" id="GO:0071555">
    <property type="term" value="P:cell wall organization"/>
    <property type="evidence" value="ECO:0007669"/>
    <property type="project" value="UniProtKB-KW"/>
</dbReference>
<dbReference type="GO" id="GO:0009252">
    <property type="term" value="P:peptidoglycan biosynthetic process"/>
    <property type="evidence" value="ECO:0000318"/>
    <property type="project" value="GO_Central"/>
</dbReference>
<dbReference type="GO" id="GO:0008360">
    <property type="term" value="P:regulation of cell shape"/>
    <property type="evidence" value="ECO:0007669"/>
    <property type="project" value="UniProtKB-KW"/>
</dbReference>
<dbReference type="FunFam" id="3.40.50.1860:FF:000002">
    <property type="entry name" value="Glutamate racemase"/>
    <property type="match status" value="1"/>
</dbReference>
<dbReference type="Gene3D" id="3.40.50.1860">
    <property type="match status" value="2"/>
</dbReference>
<dbReference type="HAMAP" id="MF_00258">
    <property type="entry name" value="Glu_racemase"/>
    <property type="match status" value="1"/>
</dbReference>
<dbReference type="InterPro" id="IPR015942">
    <property type="entry name" value="Asp/Glu/hydantoin_racemase"/>
</dbReference>
<dbReference type="InterPro" id="IPR001920">
    <property type="entry name" value="Asp/Glu_race"/>
</dbReference>
<dbReference type="InterPro" id="IPR018187">
    <property type="entry name" value="Asp/Glu_racemase_AS_1"/>
</dbReference>
<dbReference type="InterPro" id="IPR033134">
    <property type="entry name" value="Asp/Glu_racemase_AS_2"/>
</dbReference>
<dbReference type="InterPro" id="IPR004391">
    <property type="entry name" value="Glu_race"/>
</dbReference>
<dbReference type="NCBIfam" id="TIGR00067">
    <property type="entry name" value="glut_race"/>
    <property type="match status" value="1"/>
</dbReference>
<dbReference type="NCBIfam" id="NF002035">
    <property type="entry name" value="PRK00865.1-3"/>
    <property type="match status" value="1"/>
</dbReference>
<dbReference type="PANTHER" id="PTHR21198">
    <property type="entry name" value="GLUTAMATE RACEMASE"/>
    <property type="match status" value="1"/>
</dbReference>
<dbReference type="PANTHER" id="PTHR21198:SF2">
    <property type="entry name" value="GLUTAMATE RACEMASE"/>
    <property type="match status" value="1"/>
</dbReference>
<dbReference type="Pfam" id="PF01177">
    <property type="entry name" value="Asp_Glu_race"/>
    <property type="match status" value="1"/>
</dbReference>
<dbReference type="SUPFAM" id="SSF53681">
    <property type="entry name" value="Aspartate/glutamate racemase"/>
    <property type="match status" value="2"/>
</dbReference>
<dbReference type="PROSITE" id="PS00923">
    <property type="entry name" value="ASP_GLU_RACEMASE_1"/>
    <property type="match status" value="1"/>
</dbReference>
<dbReference type="PROSITE" id="PS00924">
    <property type="entry name" value="ASP_GLU_RACEMASE_2"/>
    <property type="match status" value="1"/>
</dbReference>
<evidence type="ECO:0000255" key="1">
    <source>
        <dbReference type="HAMAP-Rule" id="MF_00258"/>
    </source>
</evidence>
<sequence>MNKPIGVIDSGVGGLTVAKEIMRQLPNETIYYLGDIGRCPYGPRPGEQVKQYTVEIARKLMEFDIKMLVIACNTATAVALEYLQKTLSIPVIGVIEPGARTAIMTTRNQNVLVLGTEGTIKSEAYRTHIKRINPHVEVHGVACPGFVPLVEQMRYSDPTITSIVIHQTLKRWRNSESDTVILGCTHYPLLYKPIYDYFGGKKTVISSGLETAREVSALLTFSNEHASYTEHPDHRFFATGDPTHITNIIKEWLNLSVNVERISVND</sequence>
<feature type="chain" id="PRO_1000047616" description="Glutamate racemase">
    <location>
        <begin position="1"/>
        <end position="266"/>
    </location>
</feature>
<feature type="active site" description="Proton donor/acceptor" evidence="1">
    <location>
        <position position="72"/>
    </location>
</feature>
<feature type="active site" description="Proton donor/acceptor" evidence="1">
    <location>
        <position position="184"/>
    </location>
</feature>
<feature type="binding site" evidence="1">
    <location>
        <begin position="9"/>
        <end position="10"/>
    </location>
    <ligand>
        <name>substrate</name>
    </ligand>
</feature>
<feature type="binding site" evidence="1">
    <location>
        <begin position="41"/>
        <end position="42"/>
    </location>
    <ligand>
        <name>substrate</name>
    </ligand>
</feature>
<feature type="binding site" evidence="1">
    <location>
        <begin position="73"/>
        <end position="74"/>
    </location>
    <ligand>
        <name>substrate</name>
    </ligand>
</feature>
<feature type="binding site" evidence="1">
    <location>
        <begin position="185"/>
        <end position="186"/>
    </location>
    <ligand>
        <name>substrate</name>
    </ligand>
</feature>
<reference key="1">
    <citation type="book" date="2006" name="Gram positive pathogens, 2nd edition">
        <title>The Staphylococcus aureus NCTC 8325 genome.</title>
        <editorList>
            <person name="Fischetti V."/>
            <person name="Novick R."/>
            <person name="Ferretti J."/>
            <person name="Portnoy D."/>
            <person name="Rood J."/>
        </editorList>
        <authorList>
            <person name="Gillaspy A.F."/>
            <person name="Worrell V."/>
            <person name="Orvis J."/>
            <person name="Roe B.A."/>
            <person name="Dyer D.W."/>
            <person name="Iandolo J.J."/>
        </authorList>
    </citation>
    <scope>NUCLEOTIDE SEQUENCE [LARGE SCALE GENOMIC DNA]</scope>
    <source>
        <strain>NCTC 8325 / PS 47</strain>
    </source>
</reference>
<accession>Q2FZC6</accession>
<gene>
    <name evidence="1" type="primary">murI</name>
    <name type="ordered locus">SAOUHSC_01106</name>
</gene>
<comment type="function">
    <text evidence="1">Provides the (R)-glutamate required for cell wall biosynthesis.</text>
</comment>
<comment type="catalytic activity">
    <reaction evidence="1">
        <text>L-glutamate = D-glutamate</text>
        <dbReference type="Rhea" id="RHEA:12813"/>
        <dbReference type="ChEBI" id="CHEBI:29985"/>
        <dbReference type="ChEBI" id="CHEBI:29986"/>
        <dbReference type="EC" id="5.1.1.3"/>
    </reaction>
</comment>
<comment type="pathway">
    <text evidence="1">Cell wall biogenesis; peptidoglycan biosynthesis.</text>
</comment>
<comment type="similarity">
    <text evidence="1">Belongs to the aspartate/glutamate racemases family.</text>
</comment>
<keyword id="KW-0133">Cell shape</keyword>
<keyword id="KW-0961">Cell wall biogenesis/degradation</keyword>
<keyword id="KW-0413">Isomerase</keyword>
<keyword id="KW-0573">Peptidoglycan synthesis</keyword>
<keyword id="KW-1185">Reference proteome</keyword>
<protein>
    <recommendedName>
        <fullName evidence="1">Glutamate racemase</fullName>
        <ecNumber evidence="1">5.1.1.3</ecNumber>
    </recommendedName>
</protein>
<organism>
    <name type="scientific">Staphylococcus aureus (strain NCTC 8325 / PS 47)</name>
    <dbReference type="NCBI Taxonomy" id="93061"/>
    <lineage>
        <taxon>Bacteria</taxon>
        <taxon>Bacillati</taxon>
        <taxon>Bacillota</taxon>
        <taxon>Bacilli</taxon>
        <taxon>Bacillales</taxon>
        <taxon>Staphylococcaceae</taxon>
        <taxon>Staphylococcus</taxon>
    </lineage>
</organism>
<name>MURI_STAA8</name>